<proteinExistence type="evidence at protein level"/>
<protein>
    <recommendedName>
        <fullName>Repressor protein</fullName>
    </recommendedName>
</protein>
<sequence length="89" mass="10167">MHRRVEWMTPTDDAILSLLGPPKQLELRSGDIARNTGYSRRRISDRCTVLVDRGLLFRDDEAGHPYYGLTDFGERYVAGELTVDNLEKA</sequence>
<evidence type="ECO:0000269" key="1">
    <source>
    </source>
</evidence>
<evidence type="ECO:0000269" key="2">
    <source>
    </source>
</evidence>
<evidence type="ECO:0000305" key="3"/>
<accession>P22562</accession>
<accession>A0A3G1ZKT6</accession>
<name>VREP_BPPHH</name>
<feature type="chain" id="PRO_0000065928" description="Repressor protein">
    <location>
        <begin position="1"/>
        <end position="89"/>
    </location>
</feature>
<feature type="DNA-binding region" description="H-T-H motif" evidence="2">
    <location>
        <begin position="29"/>
        <end position="52"/>
    </location>
</feature>
<keyword id="KW-0238">DNA-binding</keyword>
<keyword id="KW-1185">Reference proteome</keyword>
<keyword id="KW-0678">Repressor</keyword>
<keyword id="KW-0804">Transcription</keyword>
<keyword id="KW-0805">Transcription regulation</keyword>
<organismHost>
    <name type="scientific">Halobacterium salinarum</name>
    <name type="common">Halobacterium halobium</name>
    <dbReference type="NCBI Taxonomy" id="2242"/>
</organismHost>
<gene>
    <name type="primary">T6</name>
</gene>
<dbReference type="EMBL" id="X52504">
    <property type="protein sequence ID" value="CAA36746.1"/>
    <property type="molecule type" value="Genomic_DNA"/>
</dbReference>
<dbReference type="EMBL" id="MK002701">
    <property type="protein sequence ID" value="AYM00300.1"/>
    <property type="molecule type" value="Genomic_DNA"/>
</dbReference>
<dbReference type="PIR" id="A38167">
    <property type="entry name" value="A38167"/>
</dbReference>
<dbReference type="SMR" id="P22562"/>
<dbReference type="Proteomes" id="UP000277198">
    <property type="component" value="Segment"/>
</dbReference>
<dbReference type="GO" id="GO:0003677">
    <property type="term" value="F:DNA binding"/>
    <property type="evidence" value="ECO:0007669"/>
    <property type="project" value="UniProtKB-KW"/>
</dbReference>
<dbReference type="GO" id="GO:0001217">
    <property type="term" value="F:DNA-binding transcription repressor activity"/>
    <property type="evidence" value="ECO:0000314"/>
    <property type="project" value="UniProtKB"/>
</dbReference>
<dbReference type="Gene3D" id="1.10.10.10">
    <property type="entry name" value="Winged helix-like DNA-binding domain superfamily/Winged helix DNA-binding domain"/>
    <property type="match status" value="1"/>
</dbReference>
<dbReference type="InterPro" id="IPR036388">
    <property type="entry name" value="WH-like_DNA-bd_sf"/>
</dbReference>
<dbReference type="InterPro" id="IPR036390">
    <property type="entry name" value="WH_DNA-bd_sf"/>
</dbReference>
<dbReference type="SUPFAM" id="SSF46785">
    <property type="entry name" value="Winged helix' DNA-binding domain"/>
    <property type="match status" value="1"/>
</dbReference>
<organism>
    <name type="scientific">Halobacterium phage phiH</name>
    <name type="common">Bacteriophage phi-H</name>
    <dbReference type="NCBI Taxonomy" id="169684"/>
    <lineage>
        <taxon>Viruses</taxon>
        <taxon>Duplodnaviria</taxon>
        <taxon>Heunggongvirae</taxon>
        <taxon>Uroviricota</taxon>
        <taxon>Caudoviricetes</taxon>
        <taxon>Vertoviridae</taxon>
        <taxon>Myohalovirus</taxon>
        <taxon>Myohalovirus phiH</taxon>
    </lineage>
</organism>
<reference key="1">
    <citation type="journal article" date="1991" name="J. Bacteriol.">
        <title>Halobacterium halobium strains lysogenic for phage phi H contain a protein resembling coliphage repressors.</title>
        <authorList>
            <person name="Ken R."/>
            <person name="Hackett N.R."/>
        </authorList>
    </citation>
    <scope>NUCLEOTIDE SEQUENCE [GENOMIC DNA]</scope>
</reference>
<reference key="2">
    <citation type="journal article" date="2018" name="Genes (Basel)">
        <title>Complete Genome Sequence of the Model Halovirus PhiH1 (PhiH1).</title>
        <authorList>
            <person name="Dyall-Smith M."/>
            <person name="Pfeifer F."/>
            <person name="Witte A."/>
            <person name="Oesterhelt D."/>
            <person name="Pfeiffer F."/>
        </authorList>
    </citation>
    <scope>NUCLEOTIDE SEQUENCE [GENOMIC DNA]</scope>
    <scope>DNA-BINDING</scope>
    <scope>FUNCTION</scope>
    <source>
        <strain>Variant phiH1</strain>
    </source>
</reference>
<reference key="3">
    <citation type="journal article" date="1989" name="Can. J. Microbiol.">
        <title>Expression and regulation of Halobacterium halobium phage phi H genes.</title>
        <authorList>
            <person name="Gropp F."/>
            <person name="Palm P."/>
            <person name="Zillig W."/>
        </authorList>
    </citation>
    <scope>INDUCTION</scope>
</reference>
<comment type="function">
    <text evidence="2 3">Transcriptional repressor expressed under lysogenic conditions, which specifically binds the host DNA site 'RRGAAG' (PubMed:30322017). The binding occurs cooperatively, probably as 2 copies of a dimer (PubMed:30322017). Possibly prevents RNA polymerase access to the promoters for lytic cell cycle transcription (Probable).</text>
</comment>
<comment type="induction">
    <text evidence="1">Expressed in the lysogenic host.</text>
</comment>